<protein>
    <recommendedName>
        <fullName evidence="1">Glycerol-1-phosphate dehydrogenase [NAD(P)+]</fullName>
        <shortName evidence="1">G1P dehydrogenase</shortName>
        <shortName evidence="1">G1PDH</shortName>
        <ecNumber evidence="1">1.1.1.261</ecNumber>
    </recommendedName>
    <alternativeName>
        <fullName evidence="1">Enantiomeric glycerophosphate synthase</fullName>
    </alternativeName>
    <alternativeName>
        <fullName evidence="1">sn-glycerol-1-phosphate dehydrogenase</fullName>
    </alternativeName>
</protein>
<feature type="chain" id="PRO_1000050606" description="Glycerol-1-phosphate dehydrogenase [NAD(P)+]">
    <location>
        <begin position="1"/>
        <end position="342"/>
    </location>
</feature>
<feature type="binding site" evidence="1">
    <location>
        <begin position="84"/>
        <end position="88"/>
    </location>
    <ligand>
        <name>NAD(+)</name>
        <dbReference type="ChEBI" id="CHEBI:57540"/>
    </ligand>
</feature>
<feature type="binding site" evidence="1">
    <location>
        <begin position="106"/>
        <end position="109"/>
    </location>
    <ligand>
        <name>NAD(+)</name>
        <dbReference type="ChEBI" id="CHEBI:57540"/>
    </ligand>
</feature>
<feature type="binding site" evidence="1">
    <location>
        <position position="111"/>
    </location>
    <ligand>
        <name>substrate</name>
    </ligand>
</feature>
<feature type="binding site" evidence="1">
    <location>
        <position position="115"/>
    </location>
    <ligand>
        <name>NAD(+)</name>
        <dbReference type="ChEBI" id="CHEBI:57540"/>
    </ligand>
</feature>
<feature type="binding site" evidence="1">
    <location>
        <position position="160"/>
    </location>
    <ligand>
        <name>substrate</name>
    </ligand>
</feature>
<feature type="binding site" evidence="1">
    <location>
        <position position="160"/>
    </location>
    <ligand>
        <name>Zn(2+)</name>
        <dbReference type="ChEBI" id="CHEBI:29105"/>
        <note>catalytic</note>
    </ligand>
</feature>
<feature type="binding site" evidence="1">
    <location>
        <position position="241"/>
    </location>
    <ligand>
        <name>Zn(2+)</name>
        <dbReference type="ChEBI" id="CHEBI:29105"/>
        <note>catalytic</note>
    </ligand>
</feature>
<feature type="binding site" evidence="1">
    <location>
        <position position="245"/>
    </location>
    <ligand>
        <name>substrate</name>
    </ligand>
</feature>
<feature type="binding site" evidence="1">
    <location>
        <position position="260"/>
    </location>
    <ligand>
        <name>Zn(2+)</name>
        <dbReference type="ChEBI" id="CHEBI:29105"/>
        <note>catalytic</note>
    </ligand>
</feature>
<accession>A4WLW1</accession>
<sequence length="342" mass="36915">MKQLESFEIPRTVIFGPGAISKTPQVVAKHKAERILIISGKSVTANYANEVAHLLSGYSVDVVRYDEVDTSYSKYDLVLGVGGGRPIDVAKVYSYLHRAPLIVIPTSASHDGIASPYVSYALSQKMASHGKIVASPIAIIADTTVILNAPSRLLKAGIGDLLGKIVAVRDWQLAHRLKGEEYSEYAAHLALTSYRIVVSNAFRIKNFTKEEDVRVLVKALIGCGVAMGIAGSSRPCSGSEHLFAHAVELLLGEKNNEAIHGELVALGTVVMAYLHGMNWRRIKRVAKEVGLPTTLKQIGIDADVAIEALTTAHTLRPDRYTILGSGLGKEAARRALETTELI</sequence>
<reference key="1">
    <citation type="submission" date="2007-04" db="EMBL/GenBank/DDBJ databases">
        <title>Complete sequence of Pyrobaculum arsenaticum DSM 13514.</title>
        <authorList>
            <consortium name="US DOE Joint Genome Institute"/>
            <person name="Copeland A."/>
            <person name="Lucas S."/>
            <person name="Lapidus A."/>
            <person name="Barry K."/>
            <person name="Glavina del Rio T."/>
            <person name="Dalin E."/>
            <person name="Tice H."/>
            <person name="Pitluck S."/>
            <person name="Chain P."/>
            <person name="Malfatti S."/>
            <person name="Shin M."/>
            <person name="Vergez L."/>
            <person name="Schmutz J."/>
            <person name="Larimer F."/>
            <person name="Land M."/>
            <person name="Hauser L."/>
            <person name="Kyrpides N."/>
            <person name="Mikhailova N."/>
            <person name="Cozen A.E."/>
            <person name="Fitz-Gibbon S.T."/>
            <person name="House C.H."/>
            <person name="Saltikov C."/>
            <person name="Lowe T.M."/>
            <person name="Richardson P."/>
        </authorList>
    </citation>
    <scope>NUCLEOTIDE SEQUENCE [LARGE SCALE GENOMIC DNA]</scope>
    <source>
        <strain>ATCC 700994 / DSM 13514 / JCM 11321 / PZ6</strain>
    </source>
</reference>
<dbReference type="EC" id="1.1.1.261" evidence="1"/>
<dbReference type="EMBL" id="CP000660">
    <property type="protein sequence ID" value="ABP51378.1"/>
    <property type="molecule type" value="Genomic_DNA"/>
</dbReference>
<dbReference type="SMR" id="A4WLW1"/>
<dbReference type="STRING" id="340102.Pars_1827"/>
<dbReference type="KEGG" id="pas:Pars_1827"/>
<dbReference type="HOGENOM" id="CLU_038362_0_0_2"/>
<dbReference type="OrthoDB" id="8656at2157"/>
<dbReference type="PhylomeDB" id="A4WLW1"/>
<dbReference type="UniPathway" id="UPA00940"/>
<dbReference type="Proteomes" id="UP000001567">
    <property type="component" value="Chromosome"/>
</dbReference>
<dbReference type="GO" id="GO:0005737">
    <property type="term" value="C:cytoplasm"/>
    <property type="evidence" value="ECO:0007669"/>
    <property type="project" value="UniProtKB-SubCell"/>
</dbReference>
<dbReference type="GO" id="GO:0106357">
    <property type="term" value="F:glycerol-1-phosphate dehydrogenase (NAD+) activity"/>
    <property type="evidence" value="ECO:0007669"/>
    <property type="project" value="RHEA"/>
</dbReference>
<dbReference type="GO" id="GO:0106358">
    <property type="term" value="F:glycerol-1-phosphate dehydrogenase (NADP+) activity"/>
    <property type="evidence" value="ECO:0007669"/>
    <property type="project" value="RHEA"/>
</dbReference>
<dbReference type="GO" id="GO:0046872">
    <property type="term" value="F:metal ion binding"/>
    <property type="evidence" value="ECO:0007669"/>
    <property type="project" value="UniProtKB-KW"/>
</dbReference>
<dbReference type="GO" id="GO:0006650">
    <property type="term" value="P:glycerophospholipid metabolic process"/>
    <property type="evidence" value="ECO:0007669"/>
    <property type="project" value="UniProtKB-UniRule"/>
</dbReference>
<dbReference type="GO" id="GO:0008654">
    <property type="term" value="P:phospholipid biosynthetic process"/>
    <property type="evidence" value="ECO:0007669"/>
    <property type="project" value="UniProtKB-KW"/>
</dbReference>
<dbReference type="CDD" id="cd08173">
    <property type="entry name" value="Gro1PDH"/>
    <property type="match status" value="1"/>
</dbReference>
<dbReference type="Gene3D" id="3.40.50.1970">
    <property type="match status" value="1"/>
</dbReference>
<dbReference type="Gene3D" id="1.20.1090.10">
    <property type="entry name" value="Dehydroquinate synthase-like - alpha domain"/>
    <property type="match status" value="1"/>
</dbReference>
<dbReference type="HAMAP" id="MF_00497_A">
    <property type="entry name" value="G1P_dehydrogenase_A"/>
    <property type="match status" value="1"/>
</dbReference>
<dbReference type="InterPro" id="IPR023002">
    <property type="entry name" value="G1P_dehydrogenase_arc"/>
</dbReference>
<dbReference type="InterPro" id="IPR032837">
    <property type="entry name" value="G1PDH"/>
</dbReference>
<dbReference type="InterPro" id="IPR016205">
    <property type="entry name" value="Glycerol_DH"/>
</dbReference>
<dbReference type="PANTHER" id="PTHR43616">
    <property type="entry name" value="GLYCEROL DEHYDROGENASE"/>
    <property type="match status" value="1"/>
</dbReference>
<dbReference type="PANTHER" id="PTHR43616:SF5">
    <property type="entry name" value="GLYCEROL DEHYDROGENASE 1"/>
    <property type="match status" value="1"/>
</dbReference>
<dbReference type="Pfam" id="PF13685">
    <property type="entry name" value="Fe-ADH_2"/>
    <property type="match status" value="1"/>
</dbReference>
<dbReference type="PIRSF" id="PIRSF000112">
    <property type="entry name" value="Glycerol_dehydrogenase"/>
    <property type="match status" value="1"/>
</dbReference>
<dbReference type="SUPFAM" id="SSF56796">
    <property type="entry name" value="Dehydroquinate synthase-like"/>
    <property type="match status" value="1"/>
</dbReference>
<gene>
    <name evidence="1" type="primary">egsA</name>
    <name type="ordered locus">Pars_1827</name>
</gene>
<organism>
    <name type="scientific">Pyrobaculum arsenaticum (strain DSM 13514 / JCM 11321 / PZ6)</name>
    <dbReference type="NCBI Taxonomy" id="340102"/>
    <lineage>
        <taxon>Archaea</taxon>
        <taxon>Thermoproteota</taxon>
        <taxon>Thermoprotei</taxon>
        <taxon>Thermoproteales</taxon>
        <taxon>Thermoproteaceae</taxon>
        <taxon>Pyrobaculum</taxon>
    </lineage>
</organism>
<evidence type="ECO:0000255" key="1">
    <source>
        <dbReference type="HAMAP-Rule" id="MF_00497"/>
    </source>
</evidence>
<name>G1PDH_PYRAR</name>
<keyword id="KW-0963">Cytoplasm</keyword>
<keyword id="KW-0444">Lipid biosynthesis</keyword>
<keyword id="KW-0443">Lipid metabolism</keyword>
<keyword id="KW-0479">Metal-binding</keyword>
<keyword id="KW-0520">NAD</keyword>
<keyword id="KW-0521">NADP</keyword>
<keyword id="KW-0560">Oxidoreductase</keyword>
<keyword id="KW-0594">Phospholipid biosynthesis</keyword>
<keyword id="KW-1208">Phospholipid metabolism</keyword>
<keyword id="KW-0862">Zinc</keyword>
<proteinExistence type="inferred from homology"/>
<comment type="function">
    <text evidence="1">Catalyzes the NAD(P)H-dependent reduction of dihydroxyacetonephosphate (DHAP or glycerone phosphate) to glycerol 1-phosphate (G1P). The G1P thus generated is used as the glycerophosphate backbone of phospholipids in the cellular membranes of Archaea.</text>
</comment>
<comment type="catalytic activity">
    <reaction evidence="1">
        <text>sn-glycerol 1-phosphate + NAD(+) = dihydroxyacetone phosphate + NADH + H(+)</text>
        <dbReference type="Rhea" id="RHEA:21412"/>
        <dbReference type="ChEBI" id="CHEBI:15378"/>
        <dbReference type="ChEBI" id="CHEBI:57540"/>
        <dbReference type="ChEBI" id="CHEBI:57642"/>
        <dbReference type="ChEBI" id="CHEBI:57685"/>
        <dbReference type="ChEBI" id="CHEBI:57945"/>
        <dbReference type="EC" id="1.1.1.261"/>
    </reaction>
</comment>
<comment type="catalytic activity">
    <reaction evidence="1">
        <text>sn-glycerol 1-phosphate + NADP(+) = dihydroxyacetone phosphate + NADPH + H(+)</text>
        <dbReference type="Rhea" id="RHEA:21416"/>
        <dbReference type="ChEBI" id="CHEBI:15378"/>
        <dbReference type="ChEBI" id="CHEBI:57642"/>
        <dbReference type="ChEBI" id="CHEBI:57685"/>
        <dbReference type="ChEBI" id="CHEBI:57783"/>
        <dbReference type="ChEBI" id="CHEBI:58349"/>
        <dbReference type="EC" id="1.1.1.261"/>
    </reaction>
</comment>
<comment type="cofactor">
    <cofactor evidence="1">
        <name>Zn(2+)</name>
        <dbReference type="ChEBI" id="CHEBI:29105"/>
    </cofactor>
    <text evidence="1">Binds 1 zinc ion per subunit.</text>
</comment>
<comment type="pathway">
    <text evidence="1">Membrane lipid metabolism; glycerophospholipid metabolism.</text>
</comment>
<comment type="subunit">
    <text evidence="1">Homodimer.</text>
</comment>
<comment type="subcellular location">
    <subcellularLocation>
        <location evidence="1">Cytoplasm</location>
    </subcellularLocation>
</comment>
<comment type="similarity">
    <text evidence="1">Belongs to the glycerol-1-phosphate dehydrogenase family.</text>
</comment>